<name>HOKD_SHIFL</name>
<proteinExistence type="inferred from homology"/>
<evidence type="ECO:0000250" key="1">
    <source>
        <dbReference type="UniProtKB" id="P0ACG4"/>
    </source>
</evidence>
<evidence type="ECO:0000255" key="2"/>
<evidence type="ECO:0000305" key="3"/>
<accession>Q7UCD5</accession>
<dbReference type="EMBL" id="AE005674">
    <property type="status" value="NOT_ANNOTATED_CDS"/>
    <property type="molecule type" value="Genomic_DNA"/>
</dbReference>
<dbReference type="EMBL" id="AE014073">
    <property type="protein sequence ID" value="AAP17027.1"/>
    <property type="molecule type" value="Genomic_DNA"/>
</dbReference>
<dbReference type="EMBL" id="AE014073">
    <property type="protein sequence ID" value="AAP17409.1"/>
    <property type="status" value="ALT_INIT"/>
    <property type="molecule type" value="Genomic_DNA"/>
</dbReference>
<dbReference type="SMR" id="Q7UCD5"/>
<dbReference type="KEGG" id="sfx:S1668"/>
<dbReference type="KEGG" id="sfx:S2143"/>
<dbReference type="PATRIC" id="fig|623.156.peg.374"/>
<dbReference type="HOGENOM" id="CLU_177638_2_0_6"/>
<dbReference type="Proteomes" id="UP000001006">
    <property type="component" value="Chromosome"/>
</dbReference>
<dbReference type="Proteomes" id="UP000002673">
    <property type="component" value="Chromosome"/>
</dbReference>
<dbReference type="GO" id="GO:0005886">
    <property type="term" value="C:plasma membrane"/>
    <property type="evidence" value="ECO:0007669"/>
    <property type="project" value="UniProtKB-SubCell"/>
</dbReference>
<dbReference type="InterPro" id="IPR000021">
    <property type="entry name" value="Hok/gef_toxin"/>
</dbReference>
<dbReference type="InterPro" id="IPR018084">
    <property type="entry name" value="Hok/gef_toxin_CS"/>
</dbReference>
<dbReference type="Pfam" id="PF01848">
    <property type="entry name" value="HOK_GEF"/>
    <property type="match status" value="1"/>
</dbReference>
<dbReference type="PRINTS" id="PR00281">
    <property type="entry name" value="HOKGEFTOXIC"/>
</dbReference>
<dbReference type="PROSITE" id="PS00556">
    <property type="entry name" value="HOK_GEF"/>
    <property type="match status" value="1"/>
</dbReference>
<gene>
    <name type="primary">hokD1</name>
    <name type="synonym">relF1</name>
    <name type="ordered locus">SF1547.1</name>
    <name type="ordered locus">S1668</name>
</gene>
<gene>
    <name type="primary">hokD2</name>
    <name type="synonym">relF2</name>
    <name type="ordered locus">SF2042.1</name>
    <name type="ordered locus">S2143</name>
</gene>
<feature type="chain" id="PRO_0000199035" description="Protein HokD">
    <location>
        <begin position="1"/>
        <end position="51"/>
    </location>
</feature>
<feature type="transmembrane region" description="Helical" evidence="2">
    <location>
        <begin position="5"/>
        <end position="25"/>
    </location>
</feature>
<comment type="function">
    <text evidence="1">Toxic component of a type I toxin-antitoxin (TA) system (By similarity). When overexpressed kills cells within minutes; causes collapse of the transmembrane potential and arrest of respiration (By similarity). Its toxic effect is probably neutralized by an antisense antitoxin Sok RNA (By similarity).</text>
</comment>
<comment type="subcellular location">
    <subcellularLocation>
        <location evidence="1">Cell inner membrane</location>
        <topology evidence="3">Single-pass membrane protein</topology>
    </subcellularLocation>
</comment>
<comment type="similarity">
    <text evidence="3">Belongs to the Hok/Gef family.</text>
</comment>
<comment type="sequence caution" evidence="3">
    <conflict type="erroneous initiation">
        <sequence resource="EMBL-CDS" id="AAP17409"/>
    </conflict>
    <text>Extended N-terminus.</text>
</comment>
<organism>
    <name type="scientific">Shigella flexneri</name>
    <dbReference type="NCBI Taxonomy" id="623"/>
    <lineage>
        <taxon>Bacteria</taxon>
        <taxon>Pseudomonadati</taxon>
        <taxon>Pseudomonadota</taxon>
        <taxon>Gammaproteobacteria</taxon>
        <taxon>Enterobacterales</taxon>
        <taxon>Enterobacteriaceae</taxon>
        <taxon>Shigella</taxon>
    </lineage>
</organism>
<keyword id="KW-0997">Cell inner membrane</keyword>
<keyword id="KW-1003">Cell membrane</keyword>
<keyword id="KW-0472">Membrane</keyword>
<keyword id="KW-1185">Reference proteome</keyword>
<keyword id="KW-1277">Toxin-antitoxin system</keyword>
<keyword id="KW-0812">Transmembrane</keyword>
<keyword id="KW-1133">Transmembrane helix</keyword>
<reference key="1">
    <citation type="journal article" date="2002" name="Nucleic Acids Res.">
        <title>Genome sequence of Shigella flexneri 2a: insights into pathogenicity through comparison with genomes of Escherichia coli K12 and O157.</title>
        <authorList>
            <person name="Jin Q."/>
            <person name="Yuan Z."/>
            <person name="Xu J."/>
            <person name="Wang Y."/>
            <person name="Shen Y."/>
            <person name="Lu W."/>
            <person name="Wang J."/>
            <person name="Liu H."/>
            <person name="Yang J."/>
            <person name="Yang F."/>
            <person name="Zhang X."/>
            <person name="Zhang J."/>
            <person name="Yang G."/>
            <person name="Wu H."/>
            <person name="Qu D."/>
            <person name="Dong J."/>
            <person name="Sun L."/>
            <person name="Xue Y."/>
            <person name="Zhao A."/>
            <person name="Gao Y."/>
            <person name="Zhu J."/>
            <person name="Kan B."/>
            <person name="Ding K."/>
            <person name="Chen S."/>
            <person name="Cheng H."/>
            <person name="Yao Z."/>
            <person name="He B."/>
            <person name="Chen R."/>
            <person name="Ma D."/>
            <person name="Qiang B."/>
            <person name="Wen Y."/>
            <person name="Hou Y."/>
            <person name="Yu J."/>
        </authorList>
    </citation>
    <scope>NUCLEOTIDE SEQUENCE [LARGE SCALE GENOMIC DNA]</scope>
    <source>
        <strain>301 / Serotype 2a</strain>
    </source>
</reference>
<reference key="2">
    <citation type="journal article" date="2003" name="Infect. Immun.">
        <title>Complete genome sequence and comparative genomics of Shigella flexneri serotype 2a strain 2457T.</title>
        <authorList>
            <person name="Wei J."/>
            <person name="Goldberg M.B."/>
            <person name="Burland V."/>
            <person name="Venkatesan M.M."/>
            <person name="Deng W."/>
            <person name="Fournier G."/>
            <person name="Mayhew G.F."/>
            <person name="Plunkett G. III"/>
            <person name="Rose D.J."/>
            <person name="Darling A."/>
            <person name="Mau B."/>
            <person name="Perna N.T."/>
            <person name="Payne S.M."/>
            <person name="Runyen-Janecky L.J."/>
            <person name="Zhou S."/>
            <person name="Schwartz D.C."/>
            <person name="Blattner F.R."/>
        </authorList>
    </citation>
    <scope>NUCLEOTIDE SEQUENCE [LARGE SCALE GENOMIC DNA]</scope>
    <source>
        <strain>ATCC 700930 / 2457T / Serotype 2a</strain>
    </source>
</reference>
<protein>
    <recommendedName>
        <fullName>Protein HokD</fullName>
    </recommendedName>
    <alternativeName>
        <fullName>Protein RelF</fullName>
    </alternativeName>
</protein>
<sequence length="51" mass="5737">MKQQKAMLIALIVICLTVIVTALVTRKDLCEVRIRTGQTEVAVFTAYEPEE</sequence>